<organism>
    <name type="scientific">Shewanella putrefaciens (strain CN-32 / ATCC BAA-453)</name>
    <dbReference type="NCBI Taxonomy" id="319224"/>
    <lineage>
        <taxon>Bacteria</taxon>
        <taxon>Pseudomonadati</taxon>
        <taxon>Pseudomonadota</taxon>
        <taxon>Gammaproteobacteria</taxon>
        <taxon>Alteromonadales</taxon>
        <taxon>Shewanellaceae</taxon>
        <taxon>Shewanella</taxon>
    </lineage>
</organism>
<gene>
    <name evidence="1" type="primary">fadI</name>
    <name type="ordered locus">Sputcn32_2460</name>
</gene>
<accession>A4Y898</accession>
<sequence>MSDRQQVTNAKGERIAIVAGLRTPFAKQATAFHGVSALDMGKMVVNELLVRSELDPKLIEQLVYGQVVQMPAAPNIAREIVLGTGMNVSTDAYSVTRACATSFQSTVNVAESIMTGNIDIGIAGGADSSSVLPIGVSKKLAHALVDLNKARSFGQKLQIFRRLGLKDLLPVPPAVAEYSTGLSMGQTAEQMAKTYNISRADQDALAHRSHTLASETWASGHLRDEVMVAHIPPYKQFIDRDNNIRENSVLESYAKLRPAFDKQHGTVTAANSTPLTDGASAIILMSEGRAKALGYQPIGYIKSYAFSAINVWQDMLMGPSYATPLALKRAGMELEDLTLIEMHEAFAAQTLANMQMFASKKFAEEKLGRNRAIGEIDMSKFNVLGGSLAYGHPFAATGTRLITQVCRELKRRGGGTGLTTACAAGGLGVAMIVEVE</sequence>
<dbReference type="EC" id="2.3.1.16" evidence="1"/>
<dbReference type="EMBL" id="CP000681">
    <property type="protein sequence ID" value="ABP76181.1"/>
    <property type="molecule type" value="Genomic_DNA"/>
</dbReference>
<dbReference type="SMR" id="A4Y898"/>
<dbReference type="STRING" id="319224.Sputcn32_2460"/>
<dbReference type="KEGG" id="spc:Sputcn32_2460"/>
<dbReference type="eggNOG" id="COG0183">
    <property type="taxonomic scope" value="Bacteria"/>
</dbReference>
<dbReference type="HOGENOM" id="CLU_031026_2_0_6"/>
<dbReference type="UniPathway" id="UPA00659"/>
<dbReference type="GO" id="GO:0005829">
    <property type="term" value="C:cytosol"/>
    <property type="evidence" value="ECO:0007669"/>
    <property type="project" value="TreeGrafter"/>
</dbReference>
<dbReference type="GO" id="GO:0003988">
    <property type="term" value="F:acetyl-CoA C-acyltransferase activity"/>
    <property type="evidence" value="ECO:0007669"/>
    <property type="project" value="UniProtKB-UniRule"/>
</dbReference>
<dbReference type="GO" id="GO:0006635">
    <property type="term" value="P:fatty acid beta-oxidation"/>
    <property type="evidence" value="ECO:0007669"/>
    <property type="project" value="UniProtKB-UniRule"/>
</dbReference>
<dbReference type="CDD" id="cd00751">
    <property type="entry name" value="thiolase"/>
    <property type="match status" value="1"/>
</dbReference>
<dbReference type="FunFam" id="3.40.47.10:FF:000011">
    <property type="entry name" value="3-ketoacyl-CoA thiolase"/>
    <property type="match status" value="1"/>
</dbReference>
<dbReference type="Gene3D" id="3.40.47.10">
    <property type="match status" value="1"/>
</dbReference>
<dbReference type="HAMAP" id="MF_01618">
    <property type="entry name" value="FadI"/>
    <property type="match status" value="1"/>
</dbReference>
<dbReference type="InterPro" id="IPR050521">
    <property type="entry name" value="3-ketoacyl-CoA_Thiolase"/>
</dbReference>
<dbReference type="InterPro" id="IPR012806">
    <property type="entry name" value="Ac-CoA_C-AcTrfase_FadI"/>
</dbReference>
<dbReference type="InterPro" id="IPR002155">
    <property type="entry name" value="Thiolase"/>
</dbReference>
<dbReference type="InterPro" id="IPR016039">
    <property type="entry name" value="Thiolase-like"/>
</dbReference>
<dbReference type="InterPro" id="IPR020610">
    <property type="entry name" value="Thiolase_AS"/>
</dbReference>
<dbReference type="InterPro" id="IPR020617">
    <property type="entry name" value="Thiolase_C"/>
</dbReference>
<dbReference type="InterPro" id="IPR020613">
    <property type="entry name" value="Thiolase_CS"/>
</dbReference>
<dbReference type="InterPro" id="IPR020616">
    <property type="entry name" value="Thiolase_N"/>
</dbReference>
<dbReference type="NCBIfam" id="TIGR01930">
    <property type="entry name" value="AcCoA-C-Actrans"/>
    <property type="match status" value="1"/>
</dbReference>
<dbReference type="NCBIfam" id="TIGR02446">
    <property type="entry name" value="FadI"/>
    <property type="match status" value="1"/>
</dbReference>
<dbReference type="NCBIfam" id="NF006516">
    <property type="entry name" value="PRK08963.1"/>
    <property type="match status" value="1"/>
</dbReference>
<dbReference type="PANTHER" id="PTHR42689">
    <property type="entry name" value="ACETYL-COA ACYLTRANSFERASE FADA2 (3-KETOACYL-COA THIOLASE) (BETA-KETOTHIOLASE)-RELATED"/>
    <property type="match status" value="1"/>
</dbReference>
<dbReference type="PANTHER" id="PTHR42689:SF1">
    <property type="entry name" value="ACETYL-COA ACYLTRANSFERASE FADA2 (3-KETOACYL-COA THIOLASE) (BETA-KETOTHIOLASE)-RELATED"/>
    <property type="match status" value="1"/>
</dbReference>
<dbReference type="Pfam" id="PF02803">
    <property type="entry name" value="Thiolase_C"/>
    <property type="match status" value="1"/>
</dbReference>
<dbReference type="Pfam" id="PF00108">
    <property type="entry name" value="Thiolase_N"/>
    <property type="match status" value="1"/>
</dbReference>
<dbReference type="PIRSF" id="PIRSF000429">
    <property type="entry name" value="Ac-CoA_Ac_transf"/>
    <property type="match status" value="1"/>
</dbReference>
<dbReference type="SUPFAM" id="SSF53901">
    <property type="entry name" value="Thiolase-like"/>
    <property type="match status" value="2"/>
</dbReference>
<dbReference type="PROSITE" id="PS00737">
    <property type="entry name" value="THIOLASE_2"/>
    <property type="match status" value="1"/>
</dbReference>
<dbReference type="PROSITE" id="PS00099">
    <property type="entry name" value="THIOLASE_3"/>
    <property type="match status" value="1"/>
</dbReference>
<proteinExistence type="inferred from homology"/>
<comment type="function">
    <text evidence="1">Catalyzes the final step of fatty acid oxidation in which acetyl-CoA is released and the CoA ester of a fatty acid two carbons shorter is formed.</text>
</comment>
<comment type="catalytic activity">
    <reaction evidence="1">
        <text>an acyl-CoA + acetyl-CoA = a 3-oxoacyl-CoA + CoA</text>
        <dbReference type="Rhea" id="RHEA:21564"/>
        <dbReference type="ChEBI" id="CHEBI:57287"/>
        <dbReference type="ChEBI" id="CHEBI:57288"/>
        <dbReference type="ChEBI" id="CHEBI:58342"/>
        <dbReference type="ChEBI" id="CHEBI:90726"/>
        <dbReference type="EC" id="2.3.1.16"/>
    </reaction>
</comment>
<comment type="pathway">
    <text evidence="1">Lipid metabolism; fatty acid beta-oxidation.</text>
</comment>
<comment type="subunit">
    <text evidence="1">Heterotetramer of two alpha chains (FadJ) and two beta chains (FadI).</text>
</comment>
<comment type="subcellular location">
    <subcellularLocation>
        <location evidence="1">Cytoplasm</location>
    </subcellularLocation>
</comment>
<comment type="similarity">
    <text evidence="1">Belongs to the thiolase-like superfamily. Thiolase family.</text>
</comment>
<keyword id="KW-0012">Acyltransferase</keyword>
<keyword id="KW-0963">Cytoplasm</keyword>
<keyword id="KW-0276">Fatty acid metabolism</keyword>
<keyword id="KW-0442">Lipid degradation</keyword>
<keyword id="KW-0443">Lipid metabolism</keyword>
<keyword id="KW-0808">Transferase</keyword>
<reference key="1">
    <citation type="submission" date="2007-04" db="EMBL/GenBank/DDBJ databases">
        <title>Complete sequence of Shewanella putrefaciens CN-32.</title>
        <authorList>
            <consortium name="US DOE Joint Genome Institute"/>
            <person name="Copeland A."/>
            <person name="Lucas S."/>
            <person name="Lapidus A."/>
            <person name="Barry K."/>
            <person name="Detter J.C."/>
            <person name="Glavina del Rio T."/>
            <person name="Hammon N."/>
            <person name="Israni S."/>
            <person name="Dalin E."/>
            <person name="Tice H."/>
            <person name="Pitluck S."/>
            <person name="Chain P."/>
            <person name="Malfatti S."/>
            <person name="Shin M."/>
            <person name="Vergez L."/>
            <person name="Schmutz J."/>
            <person name="Larimer F."/>
            <person name="Land M."/>
            <person name="Hauser L."/>
            <person name="Kyrpides N."/>
            <person name="Mikhailova N."/>
            <person name="Romine M.F."/>
            <person name="Fredrickson J."/>
            <person name="Tiedje J."/>
            <person name="Richardson P."/>
        </authorList>
    </citation>
    <scope>NUCLEOTIDE SEQUENCE [LARGE SCALE GENOMIC DNA]</scope>
    <source>
        <strain>CN-32 / ATCC BAA-453</strain>
    </source>
</reference>
<evidence type="ECO:0000255" key="1">
    <source>
        <dbReference type="HAMAP-Rule" id="MF_01618"/>
    </source>
</evidence>
<name>FADI_SHEPC</name>
<protein>
    <recommendedName>
        <fullName evidence="1">3-ketoacyl-CoA thiolase</fullName>
        <ecNumber evidence="1">2.3.1.16</ecNumber>
    </recommendedName>
    <alternativeName>
        <fullName evidence="1">ACSs</fullName>
    </alternativeName>
    <alternativeName>
        <fullName evidence="1">Acetyl-CoA acyltransferase</fullName>
    </alternativeName>
    <alternativeName>
        <fullName evidence="1">Acyl-CoA ligase</fullName>
    </alternativeName>
    <alternativeName>
        <fullName evidence="1">Beta-ketothiolase</fullName>
    </alternativeName>
    <alternativeName>
        <fullName evidence="1">Fatty acid oxidation complex subunit beta</fullName>
    </alternativeName>
</protein>
<feature type="chain" id="PRO_1000069512" description="3-ketoacyl-CoA thiolase">
    <location>
        <begin position="1"/>
        <end position="436"/>
    </location>
</feature>
<feature type="active site" description="Acyl-thioester intermediate" evidence="1">
    <location>
        <position position="99"/>
    </location>
</feature>
<feature type="active site" description="Proton acceptor" evidence="1">
    <location>
        <position position="392"/>
    </location>
</feature>
<feature type="active site" description="Proton acceptor" evidence="1">
    <location>
        <position position="422"/>
    </location>
</feature>